<protein>
    <recommendedName>
        <fullName evidence="1">Dephospho-CoA kinase</fullName>
        <ecNumber evidence="1">2.7.1.24</ecNumber>
    </recommendedName>
    <alternativeName>
        <fullName evidence="1">Dephosphocoenzyme A kinase</fullName>
    </alternativeName>
</protein>
<accession>Q7W3R8</accession>
<sequence>MYKIGLTGGIGSGKSRVADMLAEWGASVIDADEISHALTAPGGAAMPAIAREFGPQAVAADGALDRAWMRDLVFREPAARGRLEALLHPLIGLHTEQAAAQARGLYLVFVVPLLVESGRWRGRVDRICVVDCDPATQIARVQKRSGLTEPAIRRIMAAQAARATRLEAADDVIVNDGATSPDTLRARARTLHDRWLALAGAASQPGGKAAGTPE</sequence>
<keyword id="KW-0067">ATP-binding</keyword>
<keyword id="KW-0173">Coenzyme A biosynthesis</keyword>
<keyword id="KW-0963">Cytoplasm</keyword>
<keyword id="KW-0418">Kinase</keyword>
<keyword id="KW-0547">Nucleotide-binding</keyword>
<keyword id="KW-0808">Transferase</keyword>
<reference key="1">
    <citation type="journal article" date="2003" name="Nat. Genet.">
        <title>Comparative analysis of the genome sequences of Bordetella pertussis, Bordetella parapertussis and Bordetella bronchiseptica.</title>
        <authorList>
            <person name="Parkhill J."/>
            <person name="Sebaihia M."/>
            <person name="Preston A."/>
            <person name="Murphy L.D."/>
            <person name="Thomson N.R."/>
            <person name="Harris D.E."/>
            <person name="Holden M.T.G."/>
            <person name="Churcher C.M."/>
            <person name="Bentley S.D."/>
            <person name="Mungall K.L."/>
            <person name="Cerdeno-Tarraga A.-M."/>
            <person name="Temple L."/>
            <person name="James K.D."/>
            <person name="Harris B."/>
            <person name="Quail M.A."/>
            <person name="Achtman M."/>
            <person name="Atkin R."/>
            <person name="Baker S."/>
            <person name="Basham D."/>
            <person name="Bason N."/>
            <person name="Cherevach I."/>
            <person name="Chillingworth T."/>
            <person name="Collins M."/>
            <person name="Cronin A."/>
            <person name="Davis P."/>
            <person name="Doggett J."/>
            <person name="Feltwell T."/>
            <person name="Goble A."/>
            <person name="Hamlin N."/>
            <person name="Hauser H."/>
            <person name="Holroyd S."/>
            <person name="Jagels K."/>
            <person name="Leather S."/>
            <person name="Moule S."/>
            <person name="Norberczak H."/>
            <person name="O'Neil S."/>
            <person name="Ormond D."/>
            <person name="Price C."/>
            <person name="Rabbinowitsch E."/>
            <person name="Rutter S."/>
            <person name="Sanders M."/>
            <person name="Saunders D."/>
            <person name="Seeger K."/>
            <person name="Sharp S."/>
            <person name="Simmonds M."/>
            <person name="Skelton J."/>
            <person name="Squares R."/>
            <person name="Squares S."/>
            <person name="Stevens K."/>
            <person name="Unwin L."/>
            <person name="Whitehead S."/>
            <person name="Barrell B.G."/>
            <person name="Maskell D.J."/>
        </authorList>
    </citation>
    <scope>NUCLEOTIDE SEQUENCE [LARGE SCALE GENOMIC DNA]</scope>
    <source>
        <strain>12822 / ATCC BAA-587 / NCTC 13253</strain>
    </source>
</reference>
<organism>
    <name type="scientific">Bordetella parapertussis (strain 12822 / ATCC BAA-587 / NCTC 13253)</name>
    <dbReference type="NCBI Taxonomy" id="257311"/>
    <lineage>
        <taxon>Bacteria</taxon>
        <taxon>Pseudomonadati</taxon>
        <taxon>Pseudomonadota</taxon>
        <taxon>Betaproteobacteria</taxon>
        <taxon>Burkholderiales</taxon>
        <taxon>Alcaligenaceae</taxon>
        <taxon>Bordetella</taxon>
    </lineage>
</organism>
<feature type="chain" id="PRO_0000172914" description="Dephospho-CoA kinase">
    <location>
        <begin position="1"/>
        <end position="214"/>
    </location>
</feature>
<feature type="domain" description="DPCK" evidence="1">
    <location>
        <begin position="3"/>
        <end position="202"/>
    </location>
</feature>
<feature type="binding site" evidence="1">
    <location>
        <begin position="11"/>
        <end position="16"/>
    </location>
    <ligand>
        <name>ATP</name>
        <dbReference type="ChEBI" id="CHEBI:30616"/>
    </ligand>
</feature>
<comment type="function">
    <text evidence="1">Catalyzes the phosphorylation of the 3'-hydroxyl group of dephosphocoenzyme A to form coenzyme A.</text>
</comment>
<comment type="catalytic activity">
    <reaction evidence="1">
        <text>3'-dephospho-CoA + ATP = ADP + CoA + H(+)</text>
        <dbReference type="Rhea" id="RHEA:18245"/>
        <dbReference type="ChEBI" id="CHEBI:15378"/>
        <dbReference type="ChEBI" id="CHEBI:30616"/>
        <dbReference type="ChEBI" id="CHEBI:57287"/>
        <dbReference type="ChEBI" id="CHEBI:57328"/>
        <dbReference type="ChEBI" id="CHEBI:456216"/>
        <dbReference type="EC" id="2.7.1.24"/>
    </reaction>
</comment>
<comment type="pathway">
    <text evidence="1">Cofactor biosynthesis; coenzyme A biosynthesis; CoA from (R)-pantothenate: step 5/5.</text>
</comment>
<comment type="subcellular location">
    <subcellularLocation>
        <location evidence="1">Cytoplasm</location>
    </subcellularLocation>
</comment>
<comment type="similarity">
    <text evidence="1">Belongs to the CoaE family.</text>
</comment>
<comment type="sequence caution" evidence="2">
    <conflict type="erroneous initiation">
        <sequence resource="EMBL-CDS" id="CAE39244"/>
    </conflict>
</comment>
<name>COAE_BORPA</name>
<gene>
    <name evidence="1" type="primary">coaE</name>
    <name type="ordered locus">BPP3961</name>
</gene>
<dbReference type="EC" id="2.7.1.24" evidence="1"/>
<dbReference type="EMBL" id="BX640435">
    <property type="protein sequence ID" value="CAE39244.1"/>
    <property type="status" value="ALT_INIT"/>
    <property type="molecule type" value="Genomic_DNA"/>
</dbReference>
<dbReference type="SMR" id="Q7W3R8"/>
<dbReference type="KEGG" id="bpa:BPP3961"/>
<dbReference type="HOGENOM" id="CLU_057180_1_2_4"/>
<dbReference type="UniPathway" id="UPA00241">
    <property type="reaction ID" value="UER00356"/>
</dbReference>
<dbReference type="Proteomes" id="UP000001421">
    <property type="component" value="Chromosome"/>
</dbReference>
<dbReference type="GO" id="GO:0005737">
    <property type="term" value="C:cytoplasm"/>
    <property type="evidence" value="ECO:0007669"/>
    <property type="project" value="UniProtKB-SubCell"/>
</dbReference>
<dbReference type="GO" id="GO:0005524">
    <property type="term" value="F:ATP binding"/>
    <property type="evidence" value="ECO:0007669"/>
    <property type="project" value="UniProtKB-UniRule"/>
</dbReference>
<dbReference type="GO" id="GO:0004140">
    <property type="term" value="F:dephospho-CoA kinase activity"/>
    <property type="evidence" value="ECO:0007669"/>
    <property type="project" value="UniProtKB-UniRule"/>
</dbReference>
<dbReference type="GO" id="GO:0015937">
    <property type="term" value="P:coenzyme A biosynthetic process"/>
    <property type="evidence" value="ECO:0007669"/>
    <property type="project" value="UniProtKB-UniRule"/>
</dbReference>
<dbReference type="CDD" id="cd02022">
    <property type="entry name" value="DPCK"/>
    <property type="match status" value="1"/>
</dbReference>
<dbReference type="Gene3D" id="3.40.50.300">
    <property type="entry name" value="P-loop containing nucleotide triphosphate hydrolases"/>
    <property type="match status" value="1"/>
</dbReference>
<dbReference type="HAMAP" id="MF_00376">
    <property type="entry name" value="Dephospho_CoA_kinase"/>
    <property type="match status" value="1"/>
</dbReference>
<dbReference type="InterPro" id="IPR001977">
    <property type="entry name" value="Depp_CoAkinase"/>
</dbReference>
<dbReference type="InterPro" id="IPR027417">
    <property type="entry name" value="P-loop_NTPase"/>
</dbReference>
<dbReference type="NCBIfam" id="TIGR00152">
    <property type="entry name" value="dephospho-CoA kinase"/>
    <property type="match status" value="1"/>
</dbReference>
<dbReference type="PANTHER" id="PTHR10695:SF46">
    <property type="entry name" value="BIFUNCTIONAL COENZYME A SYNTHASE-RELATED"/>
    <property type="match status" value="1"/>
</dbReference>
<dbReference type="PANTHER" id="PTHR10695">
    <property type="entry name" value="DEPHOSPHO-COA KINASE-RELATED"/>
    <property type="match status" value="1"/>
</dbReference>
<dbReference type="Pfam" id="PF01121">
    <property type="entry name" value="CoaE"/>
    <property type="match status" value="1"/>
</dbReference>
<dbReference type="SUPFAM" id="SSF52540">
    <property type="entry name" value="P-loop containing nucleoside triphosphate hydrolases"/>
    <property type="match status" value="1"/>
</dbReference>
<dbReference type="PROSITE" id="PS51219">
    <property type="entry name" value="DPCK"/>
    <property type="match status" value="1"/>
</dbReference>
<proteinExistence type="inferred from homology"/>
<evidence type="ECO:0000255" key="1">
    <source>
        <dbReference type="HAMAP-Rule" id="MF_00376"/>
    </source>
</evidence>
<evidence type="ECO:0000305" key="2"/>